<evidence type="ECO:0000255" key="1">
    <source>
        <dbReference type="HAMAP-Rule" id="MF_00523"/>
    </source>
</evidence>
<dbReference type="EC" id="2.3.1.191" evidence="1"/>
<dbReference type="EMBL" id="CP000449">
    <property type="protein sequence ID" value="ABI65682.1"/>
    <property type="molecule type" value="Genomic_DNA"/>
</dbReference>
<dbReference type="RefSeq" id="WP_011643329.1">
    <property type="nucleotide sequence ID" value="NC_008347.1"/>
</dbReference>
<dbReference type="SMR" id="Q0APV5"/>
<dbReference type="STRING" id="394221.Mmar10_1390"/>
<dbReference type="KEGG" id="mmr:Mmar10_1390"/>
<dbReference type="eggNOG" id="COG1044">
    <property type="taxonomic scope" value="Bacteria"/>
</dbReference>
<dbReference type="HOGENOM" id="CLU_049865_0_2_5"/>
<dbReference type="OrthoDB" id="9784739at2"/>
<dbReference type="UniPathway" id="UPA00973"/>
<dbReference type="Proteomes" id="UP000001964">
    <property type="component" value="Chromosome"/>
</dbReference>
<dbReference type="GO" id="GO:0016020">
    <property type="term" value="C:membrane"/>
    <property type="evidence" value="ECO:0007669"/>
    <property type="project" value="GOC"/>
</dbReference>
<dbReference type="GO" id="GO:0016410">
    <property type="term" value="F:N-acyltransferase activity"/>
    <property type="evidence" value="ECO:0007669"/>
    <property type="project" value="InterPro"/>
</dbReference>
<dbReference type="GO" id="GO:0009245">
    <property type="term" value="P:lipid A biosynthetic process"/>
    <property type="evidence" value="ECO:0007669"/>
    <property type="project" value="UniProtKB-UniRule"/>
</dbReference>
<dbReference type="CDD" id="cd03352">
    <property type="entry name" value="LbH_LpxD"/>
    <property type="match status" value="1"/>
</dbReference>
<dbReference type="Gene3D" id="2.160.10.10">
    <property type="entry name" value="Hexapeptide repeat proteins"/>
    <property type="match status" value="1"/>
</dbReference>
<dbReference type="Gene3D" id="3.40.1390.10">
    <property type="entry name" value="MurE/MurF, N-terminal domain"/>
    <property type="match status" value="1"/>
</dbReference>
<dbReference type="HAMAP" id="MF_00523">
    <property type="entry name" value="LpxD"/>
    <property type="match status" value="1"/>
</dbReference>
<dbReference type="InterPro" id="IPR001451">
    <property type="entry name" value="Hexapep"/>
</dbReference>
<dbReference type="InterPro" id="IPR007691">
    <property type="entry name" value="LpxD"/>
</dbReference>
<dbReference type="InterPro" id="IPR011004">
    <property type="entry name" value="Trimer_LpxA-like_sf"/>
</dbReference>
<dbReference type="NCBIfam" id="TIGR01853">
    <property type="entry name" value="lipid_A_lpxD"/>
    <property type="match status" value="1"/>
</dbReference>
<dbReference type="NCBIfam" id="NF002060">
    <property type="entry name" value="PRK00892.1"/>
    <property type="match status" value="1"/>
</dbReference>
<dbReference type="PANTHER" id="PTHR43378">
    <property type="entry name" value="UDP-3-O-ACYLGLUCOSAMINE N-ACYLTRANSFERASE"/>
    <property type="match status" value="1"/>
</dbReference>
<dbReference type="PANTHER" id="PTHR43378:SF2">
    <property type="entry name" value="UDP-3-O-ACYLGLUCOSAMINE N-ACYLTRANSFERASE 1, MITOCHONDRIAL-RELATED"/>
    <property type="match status" value="1"/>
</dbReference>
<dbReference type="Pfam" id="PF00132">
    <property type="entry name" value="Hexapep"/>
    <property type="match status" value="3"/>
</dbReference>
<dbReference type="SUPFAM" id="SSF51161">
    <property type="entry name" value="Trimeric LpxA-like enzymes"/>
    <property type="match status" value="1"/>
</dbReference>
<name>LPXD_MARMM</name>
<organism>
    <name type="scientific">Maricaulis maris (strain MCS10)</name>
    <name type="common">Caulobacter maris</name>
    <dbReference type="NCBI Taxonomy" id="394221"/>
    <lineage>
        <taxon>Bacteria</taxon>
        <taxon>Pseudomonadati</taxon>
        <taxon>Pseudomonadota</taxon>
        <taxon>Alphaproteobacteria</taxon>
        <taxon>Maricaulales</taxon>
        <taxon>Maricaulaceae</taxon>
        <taxon>Maricaulis</taxon>
    </lineage>
</organism>
<gene>
    <name evidence="1" type="primary">lpxD</name>
    <name type="ordered locus">Mmar10_1390</name>
</gene>
<accession>Q0APV5</accession>
<proteinExistence type="inferred from homology"/>
<comment type="function">
    <text evidence="1">Catalyzes the N-acylation of UDP-3-O-acylglucosamine using 3-hydroxyacyl-ACP as the acyl donor. Is involved in the biosynthesis of lipid A, a phosphorylated glycolipid that anchors the lipopolysaccharide to the outer membrane of the cell.</text>
</comment>
<comment type="catalytic activity">
    <reaction evidence="1">
        <text>a UDP-3-O-[(3R)-3-hydroxyacyl]-alpha-D-glucosamine + a (3R)-hydroxyacyl-[ACP] = a UDP-2-N,3-O-bis[(3R)-3-hydroxyacyl]-alpha-D-glucosamine + holo-[ACP] + H(+)</text>
        <dbReference type="Rhea" id="RHEA:53836"/>
        <dbReference type="Rhea" id="RHEA-COMP:9685"/>
        <dbReference type="Rhea" id="RHEA-COMP:9945"/>
        <dbReference type="ChEBI" id="CHEBI:15378"/>
        <dbReference type="ChEBI" id="CHEBI:64479"/>
        <dbReference type="ChEBI" id="CHEBI:78827"/>
        <dbReference type="ChEBI" id="CHEBI:137740"/>
        <dbReference type="ChEBI" id="CHEBI:137748"/>
        <dbReference type="EC" id="2.3.1.191"/>
    </reaction>
</comment>
<comment type="pathway">
    <text evidence="1">Bacterial outer membrane biogenesis; LPS lipid A biosynthesis.</text>
</comment>
<comment type="subunit">
    <text evidence="1">Homotrimer.</text>
</comment>
<comment type="similarity">
    <text evidence="1">Belongs to the transferase hexapeptide repeat family. LpxD subfamily.</text>
</comment>
<protein>
    <recommendedName>
        <fullName evidence="1">UDP-3-O-acylglucosamine N-acyltransferase</fullName>
        <ecNumber evidence="1">2.3.1.191</ecNumber>
    </recommendedName>
</protein>
<reference key="1">
    <citation type="submission" date="2006-08" db="EMBL/GenBank/DDBJ databases">
        <title>Complete sequence of Maricaulis maris MCS10.</title>
        <authorList>
            <consortium name="US DOE Joint Genome Institute"/>
            <person name="Copeland A."/>
            <person name="Lucas S."/>
            <person name="Lapidus A."/>
            <person name="Barry K."/>
            <person name="Detter J.C."/>
            <person name="Glavina del Rio T."/>
            <person name="Hammon N."/>
            <person name="Israni S."/>
            <person name="Dalin E."/>
            <person name="Tice H."/>
            <person name="Pitluck S."/>
            <person name="Saunders E."/>
            <person name="Brettin T."/>
            <person name="Bruce D."/>
            <person name="Han C."/>
            <person name="Tapia R."/>
            <person name="Gilna P."/>
            <person name="Schmutz J."/>
            <person name="Larimer F."/>
            <person name="Land M."/>
            <person name="Hauser L."/>
            <person name="Kyrpides N."/>
            <person name="Mikhailova N."/>
            <person name="Viollier P."/>
            <person name="Stephens C."/>
            <person name="Richardson P."/>
        </authorList>
    </citation>
    <scope>NUCLEOTIDE SEQUENCE [LARGE SCALE GENOMIC DNA]</scope>
    <source>
        <strain>MCS10</strain>
    </source>
</reference>
<keyword id="KW-0012">Acyltransferase</keyword>
<keyword id="KW-0441">Lipid A biosynthesis</keyword>
<keyword id="KW-0444">Lipid biosynthesis</keyword>
<keyword id="KW-0443">Lipid metabolism</keyword>
<keyword id="KW-1185">Reference proteome</keyword>
<keyword id="KW-0677">Repeat</keyword>
<keyword id="KW-0808">Transferase</keyword>
<sequence>MADPRFYDRLGPLTLKDIAALSGAAISDSGTADQSVDRVTPLGEPVAGALSYAESGKLLRSAPDGALSGVAVICPPDAASEATRLGAAVLTHTAPRAAFASVLPALFQTRSFATDSFIDPSAKIGAGTRLGAGVVIGEGAEIGTDCVIGPHCVIGPGCRIGDRSRLSPHVSLQCSDIGADCNILAGAVIGEDGFGIAVSNGNTVGILHLGSVLIGDHVTIGANCTIDRGLFGATRIGASSKIDNLCHIAHNADIGENVIMAGYSGLAGSAVIADNAMLGGRVGVYDHVTIGEGARVGANSAASRDVPAGEFWVGNPAQPMRQHMRELAELRRLARPKNKTPKKG</sequence>
<feature type="chain" id="PRO_0000264394" description="UDP-3-O-acylglucosamine N-acyltransferase">
    <location>
        <begin position="1"/>
        <end position="344"/>
    </location>
</feature>
<feature type="active site" description="Proton acceptor" evidence="1">
    <location>
        <position position="250"/>
    </location>
</feature>